<protein>
    <recommendedName>
        <fullName evidence="1">Urease accessory protein UreF</fullName>
    </recommendedName>
</protein>
<organism>
    <name type="scientific">Pseudomonas putida (strain ATCC 700007 / DSM 6899 / JCM 31910 / BCRC 17059 / LMG 24140 / F1)</name>
    <dbReference type="NCBI Taxonomy" id="351746"/>
    <lineage>
        <taxon>Bacteria</taxon>
        <taxon>Pseudomonadati</taxon>
        <taxon>Pseudomonadota</taxon>
        <taxon>Gammaproteobacteria</taxon>
        <taxon>Pseudomonadales</taxon>
        <taxon>Pseudomonadaceae</taxon>
        <taxon>Pseudomonas</taxon>
    </lineage>
</organism>
<name>UREF_PSEP1</name>
<reference key="1">
    <citation type="submission" date="2007-05" db="EMBL/GenBank/DDBJ databases">
        <title>Complete sequence of Pseudomonas putida F1.</title>
        <authorList>
            <consortium name="US DOE Joint Genome Institute"/>
            <person name="Copeland A."/>
            <person name="Lucas S."/>
            <person name="Lapidus A."/>
            <person name="Barry K."/>
            <person name="Detter J.C."/>
            <person name="Glavina del Rio T."/>
            <person name="Hammon N."/>
            <person name="Israni S."/>
            <person name="Dalin E."/>
            <person name="Tice H."/>
            <person name="Pitluck S."/>
            <person name="Chain P."/>
            <person name="Malfatti S."/>
            <person name="Shin M."/>
            <person name="Vergez L."/>
            <person name="Schmutz J."/>
            <person name="Larimer F."/>
            <person name="Land M."/>
            <person name="Hauser L."/>
            <person name="Kyrpides N."/>
            <person name="Lykidis A."/>
            <person name="Parales R."/>
            <person name="Richardson P."/>
        </authorList>
    </citation>
    <scope>NUCLEOTIDE SEQUENCE [LARGE SCALE GENOMIC DNA]</scope>
    <source>
        <strain>ATCC 700007 / DSM 6899 / JCM 31910 / BCRC 17059 / LMG 24140 / F1</strain>
    </source>
</reference>
<evidence type="ECO:0000255" key="1">
    <source>
        <dbReference type="HAMAP-Rule" id="MF_01385"/>
    </source>
</evidence>
<keyword id="KW-0143">Chaperone</keyword>
<keyword id="KW-0963">Cytoplasm</keyword>
<keyword id="KW-0996">Nickel insertion</keyword>
<accession>A5W4B3</accession>
<dbReference type="EMBL" id="CP000712">
    <property type="protein sequence ID" value="ABQ78973.1"/>
    <property type="molecule type" value="Genomic_DNA"/>
</dbReference>
<dbReference type="SMR" id="A5W4B3"/>
<dbReference type="KEGG" id="ppf:Pput_2841"/>
<dbReference type="eggNOG" id="COG0830">
    <property type="taxonomic scope" value="Bacteria"/>
</dbReference>
<dbReference type="HOGENOM" id="CLU_049215_2_1_6"/>
<dbReference type="GO" id="GO:0005737">
    <property type="term" value="C:cytoplasm"/>
    <property type="evidence" value="ECO:0007669"/>
    <property type="project" value="UniProtKB-SubCell"/>
</dbReference>
<dbReference type="GO" id="GO:0016151">
    <property type="term" value="F:nickel cation binding"/>
    <property type="evidence" value="ECO:0007669"/>
    <property type="project" value="UniProtKB-UniRule"/>
</dbReference>
<dbReference type="Gene3D" id="1.10.4190.10">
    <property type="entry name" value="Urease accessory protein UreF"/>
    <property type="match status" value="1"/>
</dbReference>
<dbReference type="HAMAP" id="MF_01385">
    <property type="entry name" value="UreF"/>
    <property type="match status" value="1"/>
</dbReference>
<dbReference type="InterPro" id="IPR002639">
    <property type="entry name" value="UreF"/>
</dbReference>
<dbReference type="InterPro" id="IPR038277">
    <property type="entry name" value="UreF_sf"/>
</dbReference>
<dbReference type="PANTHER" id="PTHR33620">
    <property type="entry name" value="UREASE ACCESSORY PROTEIN F"/>
    <property type="match status" value="1"/>
</dbReference>
<dbReference type="PANTHER" id="PTHR33620:SF1">
    <property type="entry name" value="UREASE ACCESSORY PROTEIN F"/>
    <property type="match status" value="1"/>
</dbReference>
<dbReference type="Pfam" id="PF01730">
    <property type="entry name" value="UreF"/>
    <property type="match status" value="1"/>
</dbReference>
<dbReference type="PIRSF" id="PIRSF009467">
    <property type="entry name" value="Ureas_acces_UreF"/>
    <property type="match status" value="1"/>
</dbReference>
<proteinExistence type="inferred from homology"/>
<sequence length="224" mass="24460">MNSDLALLRLLQLASPGLPVGGFTYSQGLEWAVEAGWVRGVDSFVGWQREQVHDTLACLDWPVLARLYRACQAEDAEAFGHWSRFLLANRETAELRLEEQQRGAALARLLDGWQLGQAPAWRASLELTQLGGMAWLAAHWAIPLRQLALGHGFAWLEGAVMAGVKLVPFGQQAAQTLLRDLGADLPAALDQALALGDDQLGGGLPLLAIASSRHETQYTRLFRS</sequence>
<comment type="function">
    <text evidence="1">Required for maturation of urease via the functional incorporation of the urease nickel metallocenter.</text>
</comment>
<comment type="subunit">
    <text evidence="1">UreD, UreF and UreG form a complex that acts as a GTP-hydrolysis-dependent molecular chaperone, activating the urease apoprotein by helping to assemble the nickel containing metallocenter of UreC. The UreE protein probably delivers the nickel.</text>
</comment>
<comment type="subcellular location">
    <subcellularLocation>
        <location evidence="1">Cytoplasm</location>
    </subcellularLocation>
</comment>
<comment type="similarity">
    <text evidence="1">Belongs to the UreF family.</text>
</comment>
<gene>
    <name evidence="1" type="primary">ureF</name>
    <name type="ordered locus">Pput_2841</name>
</gene>
<feature type="chain" id="PRO_0000344151" description="Urease accessory protein UreF">
    <location>
        <begin position="1"/>
        <end position="224"/>
    </location>
</feature>